<protein>
    <recommendedName>
        <fullName>Regulator of free ubiquitin chains 1</fullName>
    </recommendedName>
</protein>
<comment type="function">
    <text evidence="1">Inhibitor of the DOA4 deubiquitinase involved in the regulation of protein degradation by the proteasome and maintenance of a normal level of free ubiquitin.</text>
</comment>
<comment type="subcellular location">
    <subcellularLocation>
        <location evidence="1">Endosome</location>
    </subcellularLocation>
</comment>
<comment type="similarity">
    <text evidence="2">Belongs to the RFU1 family.</text>
</comment>
<reference key="1">
    <citation type="journal article" date="2004" name="Nature">
        <title>Genome evolution in yeasts.</title>
        <authorList>
            <person name="Dujon B."/>
            <person name="Sherman D."/>
            <person name="Fischer G."/>
            <person name="Durrens P."/>
            <person name="Casaregola S."/>
            <person name="Lafontaine I."/>
            <person name="de Montigny J."/>
            <person name="Marck C."/>
            <person name="Neuveglise C."/>
            <person name="Talla E."/>
            <person name="Goffard N."/>
            <person name="Frangeul L."/>
            <person name="Aigle M."/>
            <person name="Anthouard V."/>
            <person name="Babour A."/>
            <person name="Barbe V."/>
            <person name="Barnay S."/>
            <person name="Blanchin S."/>
            <person name="Beckerich J.-M."/>
            <person name="Beyne E."/>
            <person name="Bleykasten C."/>
            <person name="Boisrame A."/>
            <person name="Boyer J."/>
            <person name="Cattolico L."/>
            <person name="Confanioleri F."/>
            <person name="de Daruvar A."/>
            <person name="Despons L."/>
            <person name="Fabre E."/>
            <person name="Fairhead C."/>
            <person name="Ferry-Dumazet H."/>
            <person name="Groppi A."/>
            <person name="Hantraye F."/>
            <person name="Hennequin C."/>
            <person name="Jauniaux N."/>
            <person name="Joyet P."/>
            <person name="Kachouri R."/>
            <person name="Kerrest A."/>
            <person name="Koszul R."/>
            <person name="Lemaire M."/>
            <person name="Lesur I."/>
            <person name="Ma L."/>
            <person name="Muller H."/>
            <person name="Nicaud J.-M."/>
            <person name="Nikolski M."/>
            <person name="Oztas S."/>
            <person name="Ozier-Kalogeropoulos O."/>
            <person name="Pellenz S."/>
            <person name="Potier S."/>
            <person name="Richard G.-F."/>
            <person name="Straub M.-L."/>
            <person name="Suleau A."/>
            <person name="Swennen D."/>
            <person name="Tekaia F."/>
            <person name="Wesolowski-Louvel M."/>
            <person name="Westhof E."/>
            <person name="Wirth B."/>
            <person name="Zeniou-Meyer M."/>
            <person name="Zivanovic Y."/>
            <person name="Bolotin-Fukuhara M."/>
            <person name="Thierry A."/>
            <person name="Bouchier C."/>
            <person name="Caudron B."/>
            <person name="Scarpelli C."/>
            <person name="Gaillardin C."/>
            <person name="Weissenbach J."/>
            <person name="Wincker P."/>
            <person name="Souciet J.-L."/>
        </authorList>
    </citation>
    <scope>NUCLEOTIDE SEQUENCE [LARGE SCALE GENOMIC DNA]</scope>
    <source>
        <strain>ATCC 8585 / CBS 2359 / DSM 70799 / NBRC 1267 / NRRL Y-1140 / WM37</strain>
    </source>
</reference>
<accession>Q6CRY0</accession>
<dbReference type="EMBL" id="CR382124">
    <property type="protein sequence ID" value="CAH00405.1"/>
    <property type="molecule type" value="Genomic_DNA"/>
</dbReference>
<dbReference type="RefSeq" id="XP_453309.1">
    <property type="nucleotide sequence ID" value="XM_453309.1"/>
</dbReference>
<dbReference type="SMR" id="Q6CRY0"/>
<dbReference type="FunCoup" id="Q6CRY0">
    <property type="interactions" value="35"/>
</dbReference>
<dbReference type="STRING" id="284590.Q6CRY0"/>
<dbReference type="PaxDb" id="284590-Q6CRY0"/>
<dbReference type="KEGG" id="kla:KLLA0_D05577g"/>
<dbReference type="eggNOG" id="ENOG502S3ZX">
    <property type="taxonomic scope" value="Eukaryota"/>
</dbReference>
<dbReference type="HOGENOM" id="CLU_1348926_0_0_1"/>
<dbReference type="InParanoid" id="Q6CRY0"/>
<dbReference type="OMA" id="KSCHELS"/>
<dbReference type="Proteomes" id="UP000000598">
    <property type="component" value="Chromosome D"/>
</dbReference>
<dbReference type="GO" id="GO:0005768">
    <property type="term" value="C:endosome"/>
    <property type="evidence" value="ECO:0007669"/>
    <property type="project" value="UniProtKB-SubCell"/>
</dbReference>
<dbReference type="GO" id="GO:0004869">
    <property type="term" value="F:cysteine-type endopeptidase inhibitor activity"/>
    <property type="evidence" value="ECO:0007669"/>
    <property type="project" value="UniProtKB-KW"/>
</dbReference>
<dbReference type="Gene3D" id="1.20.58.80">
    <property type="entry name" value="Phosphotransferase system, lactose/cellobiose-type IIA subunit"/>
    <property type="match status" value="1"/>
</dbReference>
<dbReference type="InterPro" id="IPR015063">
    <property type="entry name" value="USP8_dimer"/>
</dbReference>
<dbReference type="PANTHER" id="PTHR12947:SF20">
    <property type="match status" value="1"/>
</dbReference>
<dbReference type="PANTHER" id="PTHR12947">
    <property type="entry name" value="AMSH-LIKE PROTEASE"/>
    <property type="match status" value="1"/>
</dbReference>
<dbReference type="Pfam" id="PF08969">
    <property type="entry name" value="USP8_dimer"/>
    <property type="match status" value="1"/>
</dbReference>
<dbReference type="SUPFAM" id="SSF140856">
    <property type="entry name" value="USP8 N-terminal domain-like"/>
    <property type="match status" value="1"/>
</dbReference>
<feature type="chain" id="PRO_0000376814" description="Regulator of free ubiquitin chains 1">
    <location>
        <begin position="1"/>
        <end position="189"/>
    </location>
</feature>
<evidence type="ECO:0000250" key="1"/>
<evidence type="ECO:0000305" key="2"/>
<keyword id="KW-0967">Endosome</keyword>
<keyword id="KW-0646">Protease inhibitor</keyword>
<keyword id="KW-1185">Reference proteome</keyword>
<keyword id="KW-0789">Thiol protease inhibitor</keyword>
<proteinExistence type="inferred from homology"/>
<sequence>MKSSSHLKQEALNYRFNSNVPLKLYLTTCISIVEEAQNSARCNNMERAYLLYIRYLDLCLNRLVHHSEVNTSVESLYKREYFQLLKLEVPAIMKITEELKIKIDARYKSLANNVATSTYVRSPAVMTTNPSDEINLPSSFDEQKFNQSISWFNHSSKHFSAQSDSNNEYPELPELNATSTSVTYTMPAL</sequence>
<name>RFU1_KLULA</name>
<organism>
    <name type="scientific">Kluyveromyces lactis (strain ATCC 8585 / CBS 2359 / DSM 70799 / NBRC 1267 / NRRL Y-1140 / WM37)</name>
    <name type="common">Yeast</name>
    <name type="synonym">Candida sphaerica</name>
    <dbReference type="NCBI Taxonomy" id="284590"/>
    <lineage>
        <taxon>Eukaryota</taxon>
        <taxon>Fungi</taxon>
        <taxon>Dikarya</taxon>
        <taxon>Ascomycota</taxon>
        <taxon>Saccharomycotina</taxon>
        <taxon>Saccharomycetes</taxon>
        <taxon>Saccharomycetales</taxon>
        <taxon>Saccharomycetaceae</taxon>
        <taxon>Kluyveromyces</taxon>
    </lineage>
</organism>
<gene>
    <name type="primary">RFU1</name>
    <name type="ordered locus">KLLA0D05577g</name>
</gene>